<organism>
    <name type="scientific">Sulfolobus islandicus filamentous virus (isolate Iceland/Hveragerdi)</name>
    <name type="common">SIFV</name>
    <dbReference type="NCBI Taxonomy" id="654908"/>
    <lineage>
        <taxon>Viruses</taxon>
        <taxon>Adnaviria</taxon>
        <taxon>Zilligvirae</taxon>
        <taxon>Taleaviricota</taxon>
        <taxon>Tokiviricetes</taxon>
        <taxon>Ligamenvirales</taxon>
        <taxon>Lipothrixviridae</taxon>
        <taxon>Betalipothrixvirus</taxon>
        <taxon>Sulfolobus islandicus filamentous virus</taxon>
    </lineage>
</organism>
<keyword id="KW-1185">Reference proteome</keyword>
<keyword id="KW-0732">Signal</keyword>
<feature type="signal peptide" evidence="1">
    <location>
        <begin position="1"/>
        <end position="19"/>
    </location>
</feature>
<feature type="chain" id="PRO_0000385441" description="Uncharacterized protein 37">
    <location>
        <begin position="20"/>
        <end position="89"/>
    </location>
</feature>
<sequence length="89" mass="10445">MQLTKTQFVRCVFLLLANSKKYTIPQAVRISYRLLDKTRVSLKTKERLLVLLDALESGKITPREFTKRLFLEYPKPSDKVKVLSLKIFE</sequence>
<proteinExistence type="inferred from homology"/>
<accession>Q914J3</accession>
<gene>
    <name type="primary">SIFV0037</name>
</gene>
<dbReference type="EMBL" id="AF440571">
    <property type="protein sequence ID" value="AAL27748.1"/>
    <property type="molecule type" value="Genomic_DNA"/>
</dbReference>
<dbReference type="RefSeq" id="NP_445702.1">
    <property type="nucleotide sequence ID" value="NC_003214.2"/>
</dbReference>
<dbReference type="SMR" id="Q914J3"/>
<dbReference type="GeneID" id="922326"/>
<dbReference type="KEGG" id="vg:922326"/>
<dbReference type="Proteomes" id="UP000007017">
    <property type="component" value="Segment"/>
</dbReference>
<evidence type="ECO:0000255" key="1"/>
<reference key="1">
    <citation type="journal article" date="2000" name="Virology">
        <title>A novel lipothrixvirus, SIFV, of the extremely thermophilic crenarchaeon Sulfolobus.</title>
        <authorList>
            <person name="Arnold H.P."/>
            <person name="Zillig W."/>
            <person name="Ziese U."/>
            <person name="Holz I."/>
            <person name="Crosby M."/>
            <person name="Utterback T."/>
            <person name="Weidmann J.F."/>
            <person name="Umayam L.A."/>
            <person name="Teffera K."/>
            <person name="Kristjanson J.K."/>
            <person name="Klenk H.P."/>
            <person name="Nelson K.E."/>
            <person name="Fraser C.M."/>
        </authorList>
    </citation>
    <scope>NUCLEOTIDE SEQUENCE [GENOMIC DNA]</scope>
</reference>
<name>Y037_SIFVH</name>
<organismHost>
    <name type="scientific">Saccharolobus islandicus</name>
    <name type="common">Sulfolobus islandicus</name>
    <dbReference type="NCBI Taxonomy" id="43080"/>
</organismHost>
<protein>
    <recommendedName>
        <fullName>Uncharacterized protein 37</fullName>
    </recommendedName>
</protein>